<keyword id="KW-0067">ATP-binding</keyword>
<keyword id="KW-0963">Cytoplasm</keyword>
<keyword id="KW-0275">Fatty acid biosynthesis</keyword>
<keyword id="KW-0276">Fatty acid metabolism</keyword>
<keyword id="KW-0444">Lipid biosynthesis</keyword>
<keyword id="KW-0443">Lipid metabolism</keyword>
<keyword id="KW-0547">Nucleotide-binding</keyword>
<keyword id="KW-1185">Reference proteome</keyword>
<keyword id="KW-0808">Transferase</keyword>
<dbReference type="EC" id="2.1.3.15" evidence="1"/>
<dbReference type="EMBL" id="CP001678">
    <property type="protein sequence ID" value="ACT60023.1"/>
    <property type="molecule type" value="Genomic_DNA"/>
</dbReference>
<dbReference type="RefSeq" id="WP_015828173.1">
    <property type="nucleotide sequence ID" value="NC_012982.1"/>
</dbReference>
<dbReference type="SMR" id="C6XMV9"/>
<dbReference type="STRING" id="582402.Hbal_2343"/>
<dbReference type="KEGG" id="hba:Hbal_2343"/>
<dbReference type="eggNOG" id="COG0777">
    <property type="taxonomic scope" value="Bacteria"/>
</dbReference>
<dbReference type="HOGENOM" id="CLU_015486_1_0_5"/>
<dbReference type="OrthoDB" id="9772975at2"/>
<dbReference type="UniPathway" id="UPA00655">
    <property type="reaction ID" value="UER00711"/>
</dbReference>
<dbReference type="Proteomes" id="UP000002745">
    <property type="component" value="Chromosome"/>
</dbReference>
<dbReference type="GO" id="GO:0009329">
    <property type="term" value="C:acetate CoA-transferase complex"/>
    <property type="evidence" value="ECO:0007669"/>
    <property type="project" value="TreeGrafter"/>
</dbReference>
<dbReference type="GO" id="GO:0003989">
    <property type="term" value="F:acetyl-CoA carboxylase activity"/>
    <property type="evidence" value="ECO:0007669"/>
    <property type="project" value="InterPro"/>
</dbReference>
<dbReference type="GO" id="GO:0005524">
    <property type="term" value="F:ATP binding"/>
    <property type="evidence" value="ECO:0007669"/>
    <property type="project" value="UniProtKB-KW"/>
</dbReference>
<dbReference type="GO" id="GO:0016743">
    <property type="term" value="F:carboxyl- or carbamoyltransferase activity"/>
    <property type="evidence" value="ECO:0007669"/>
    <property type="project" value="UniProtKB-UniRule"/>
</dbReference>
<dbReference type="GO" id="GO:0006633">
    <property type="term" value="P:fatty acid biosynthetic process"/>
    <property type="evidence" value="ECO:0007669"/>
    <property type="project" value="UniProtKB-KW"/>
</dbReference>
<dbReference type="GO" id="GO:2001295">
    <property type="term" value="P:malonyl-CoA biosynthetic process"/>
    <property type="evidence" value="ECO:0007669"/>
    <property type="project" value="UniProtKB-UniRule"/>
</dbReference>
<dbReference type="Gene3D" id="3.90.226.10">
    <property type="entry name" value="2-enoyl-CoA Hydratase, Chain A, domain 1"/>
    <property type="match status" value="1"/>
</dbReference>
<dbReference type="HAMAP" id="MF_01395">
    <property type="entry name" value="AcetylCoA_CT_beta"/>
    <property type="match status" value="1"/>
</dbReference>
<dbReference type="InterPro" id="IPR034733">
    <property type="entry name" value="AcCoA_carboxyl_beta"/>
</dbReference>
<dbReference type="InterPro" id="IPR000438">
    <property type="entry name" value="Acetyl_CoA_COase_Trfase_b_su"/>
</dbReference>
<dbReference type="InterPro" id="IPR029045">
    <property type="entry name" value="ClpP/crotonase-like_dom_sf"/>
</dbReference>
<dbReference type="InterPro" id="IPR011762">
    <property type="entry name" value="COA_CT_N"/>
</dbReference>
<dbReference type="PANTHER" id="PTHR42995">
    <property type="entry name" value="ACETYL-COENZYME A CARBOXYLASE CARBOXYL TRANSFERASE SUBUNIT BETA, CHLOROPLASTIC"/>
    <property type="match status" value="1"/>
</dbReference>
<dbReference type="PANTHER" id="PTHR42995:SF5">
    <property type="entry name" value="ACETYL-COENZYME A CARBOXYLASE CARBOXYL TRANSFERASE SUBUNIT BETA, CHLOROPLASTIC"/>
    <property type="match status" value="1"/>
</dbReference>
<dbReference type="Pfam" id="PF01039">
    <property type="entry name" value="Carboxyl_trans"/>
    <property type="match status" value="1"/>
</dbReference>
<dbReference type="PRINTS" id="PR01070">
    <property type="entry name" value="ACCCTRFRASEB"/>
</dbReference>
<dbReference type="SUPFAM" id="SSF52096">
    <property type="entry name" value="ClpP/crotonase"/>
    <property type="match status" value="1"/>
</dbReference>
<dbReference type="PROSITE" id="PS50980">
    <property type="entry name" value="COA_CT_NTER"/>
    <property type="match status" value="1"/>
</dbReference>
<reference key="1">
    <citation type="journal article" date="2011" name="J. Bacteriol.">
        <title>Genome sequences of eight morphologically diverse alphaproteobacteria.</title>
        <authorList>
            <consortium name="US DOE Joint Genome Institute"/>
            <person name="Brown P.J."/>
            <person name="Kysela D.T."/>
            <person name="Buechlein A."/>
            <person name="Hemmerich C."/>
            <person name="Brun Y.V."/>
        </authorList>
    </citation>
    <scope>NUCLEOTIDE SEQUENCE [LARGE SCALE GENOMIC DNA]</scope>
    <source>
        <strain>ATCC 49814 / DSM 5838 / IFAM 1418</strain>
    </source>
</reference>
<name>ACCD_HIRBI</name>
<feature type="chain" id="PRO_0000389756" description="Acetyl-coenzyme A carboxylase carboxyl transferase subunit beta">
    <location>
        <begin position="1"/>
        <end position="346"/>
    </location>
</feature>
<feature type="domain" description="CoA carboxyltransferase N-terminal" evidence="2">
    <location>
        <begin position="24"/>
        <end position="292"/>
    </location>
</feature>
<feature type="region of interest" description="Disordered" evidence="3">
    <location>
        <begin position="300"/>
        <end position="346"/>
    </location>
</feature>
<feature type="compositionally biased region" description="Acidic residues" evidence="3">
    <location>
        <begin position="300"/>
        <end position="311"/>
    </location>
</feature>
<feature type="compositionally biased region" description="Basic residues" evidence="3">
    <location>
        <begin position="330"/>
        <end position="340"/>
    </location>
</feature>
<evidence type="ECO:0000255" key="1">
    <source>
        <dbReference type="HAMAP-Rule" id="MF_01395"/>
    </source>
</evidence>
<evidence type="ECO:0000255" key="2">
    <source>
        <dbReference type="PROSITE-ProRule" id="PRU01136"/>
    </source>
</evidence>
<evidence type="ECO:0000256" key="3">
    <source>
        <dbReference type="SAM" id="MobiDB-lite"/>
    </source>
</evidence>
<comment type="function">
    <text evidence="1">Component of the acetyl coenzyme A carboxylase (ACC) complex. Biotin carboxylase (BC) catalyzes the carboxylation of biotin on its carrier protein (BCCP) and then the CO(2) group is transferred by the transcarboxylase to acetyl-CoA to form malonyl-CoA.</text>
</comment>
<comment type="catalytic activity">
    <reaction evidence="1">
        <text>N(6)-carboxybiotinyl-L-lysyl-[protein] + acetyl-CoA = N(6)-biotinyl-L-lysyl-[protein] + malonyl-CoA</text>
        <dbReference type="Rhea" id="RHEA:54728"/>
        <dbReference type="Rhea" id="RHEA-COMP:10505"/>
        <dbReference type="Rhea" id="RHEA-COMP:10506"/>
        <dbReference type="ChEBI" id="CHEBI:57288"/>
        <dbReference type="ChEBI" id="CHEBI:57384"/>
        <dbReference type="ChEBI" id="CHEBI:83144"/>
        <dbReference type="ChEBI" id="CHEBI:83145"/>
        <dbReference type="EC" id="2.1.3.15"/>
    </reaction>
</comment>
<comment type="pathway">
    <text evidence="1">Lipid metabolism; malonyl-CoA biosynthesis; malonyl-CoA from acetyl-CoA: step 1/1.</text>
</comment>
<comment type="subunit">
    <text evidence="1">Acetyl-CoA carboxylase is a heterohexamer composed of biotin carboxyl carrier protein (AccB), biotin carboxylase (AccC) and two subunits each of ACCase subunit alpha (AccA) and ACCase subunit beta (AccD).</text>
</comment>
<comment type="subcellular location">
    <subcellularLocation>
        <location evidence="1">Cytoplasm</location>
    </subcellularLocation>
</comment>
<comment type="similarity">
    <text evidence="1">Belongs to the AccD/PCCB family.</text>
</comment>
<organism>
    <name type="scientific">Hirschia baltica (strain ATCC 49814 / DSM 5838 / IFAM 1418)</name>
    <dbReference type="NCBI Taxonomy" id="582402"/>
    <lineage>
        <taxon>Bacteria</taxon>
        <taxon>Pseudomonadati</taxon>
        <taxon>Pseudomonadota</taxon>
        <taxon>Alphaproteobacteria</taxon>
        <taxon>Hyphomonadales</taxon>
        <taxon>Hyphomonadaceae</taxon>
        <taxon>Hirschia</taxon>
    </lineage>
</organism>
<sequence length="346" mass="37320">MSWLTNLPPGLKNVFGKKDTPENLWIKCPKSGDLVYKDDLEASLFVTPAGAHLRVGPDLRFKSMFDGSEYEELELPEVVKDPLKFKDDRKYVDRLKSSRAKTGREDCMAAAIGKIGKQNAVVLVQDFAFMGGSLGMAAGEAFITAAEKALETKSALIICTASGGARMQEGALSLMQMPRTTVAITELKDASLPYIVVLTDPTTGGVAASYAMIGDIHIGEPEAMVAFAGARVIEQTIREKLPEGFQRAEFLRERGMVDMVVDRRDLPAKLGQILSMLMGGKPLPEVEPIAVADVEELEAAEAEAAPDEVVEVEAPAVDEIVEEKPAATKAKPRSKAKSKAAPKTDE</sequence>
<proteinExistence type="inferred from homology"/>
<accession>C6XMV9</accession>
<gene>
    <name evidence="1" type="primary">accD</name>
    <name type="ordered locus">Hbal_2343</name>
</gene>
<protein>
    <recommendedName>
        <fullName evidence="1">Acetyl-coenzyme A carboxylase carboxyl transferase subunit beta</fullName>
        <shortName evidence="1">ACCase subunit beta</shortName>
        <shortName evidence="1">Acetyl-CoA carboxylase carboxyltransferase subunit beta</shortName>
        <ecNumber evidence="1">2.1.3.15</ecNumber>
    </recommendedName>
</protein>